<evidence type="ECO:0000250" key="1"/>
<evidence type="ECO:0000305" key="2"/>
<evidence type="ECO:0007829" key="3">
    <source>
        <dbReference type="PDB" id="1PSE"/>
    </source>
</evidence>
<gene>
    <name type="primary">psaE</name>
    <name type="ordered locus">SYNPCC7002_A1393</name>
</gene>
<sequence>MAIERGSKVKILRKESYWYGDVGTVASIDKSGIIYPVIVRFNKVNYNGFSGSAGGLNTNNFAEHELEVVG</sequence>
<reference key="1">
    <citation type="journal article" date="1993" name="Mol. Microbiol.">
        <title>Cloning and characterization of the psaE gene of the cyanobacterium Synechococcus sp. PCC 7002: characterization of a psaE mutant and overproduction of the protein in Escherichia coli.</title>
        <authorList>
            <person name="Zhao J."/>
            <person name="Snyder W."/>
            <person name="Muhlenhoff U."/>
            <person name="Rhiel E."/>
            <person name="Bryant D.A."/>
        </authorList>
    </citation>
    <scope>NUCLEOTIDE SEQUENCE [GENOMIC DNA]</scope>
</reference>
<reference key="2">
    <citation type="submission" date="2008-02" db="EMBL/GenBank/DDBJ databases">
        <title>Complete sequence of Synechococcus sp. PCC 7002.</title>
        <authorList>
            <person name="Li T."/>
            <person name="Zhao J."/>
            <person name="Zhao C."/>
            <person name="Liu Z."/>
            <person name="Zhao F."/>
            <person name="Marquardt J."/>
            <person name="Nomura C.T."/>
            <person name="Persson S."/>
            <person name="Detter J.C."/>
            <person name="Richardson P.M."/>
            <person name="Lanz C."/>
            <person name="Schuster S.C."/>
            <person name="Wang J."/>
            <person name="Li S."/>
            <person name="Huang X."/>
            <person name="Cai T."/>
            <person name="Yu Z."/>
            <person name="Luo J."/>
            <person name="Zhao J."/>
            <person name="Bryant D.A."/>
        </authorList>
    </citation>
    <scope>NUCLEOTIDE SEQUENCE [LARGE SCALE GENOMIC DNA]</scope>
    <source>
        <strain>ATCC 27264 / PCC 7002 / PR-6</strain>
    </source>
</reference>
<reference key="3">
    <citation type="journal article" date="1994" name="Biochemistry">
        <title>Three-dimensional solution structure of PsaE from the cyanobacterium Synechococcus sp. strain PCC 7002, a photosystem I protein that shows structural homology with SH3 domains.</title>
        <authorList>
            <person name="Falzone C.J."/>
            <person name="Kao Y.-H."/>
            <person name="Zhao J."/>
            <person name="Bryant D.A."/>
            <person name="Lecomte J.T.J."/>
        </authorList>
    </citation>
    <scope>STRUCTURE BY NMR</scope>
</reference>
<proteinExistence type="evidence at protein level"/>
<dbReference type="EMBL" id="M99379">
    <property type="protein sequence ID" value="AAA27355.1"/>
    <property type="molecule type" value="Genomic_DNA"/>
</dbReference>
<dbReference type="EMBL" id="CP000951">
    <property type="protein sequence ID" value="ACA99389.1"/>
    <property type="molecule type" value="Genomic_DNA"/>
</dbReference>
<dbReference type="RefSeq" id="WP_012307012.1">
    <property type="nucleotide sequence ID" value="NZ_JAHHPU010000001.1"/>
</dbReference>
<dbReference type="PDB" id="1PSE">
    <property type="method" value="NMR"/>
    <property type="chains" value="A=2-70"/>
</dbReference>
<dbReference type="PDB" id="1PSF">
    <property type="method" value="NMR"/>
    <property type="chains" value="A=2-70"/>
</dbReference>
<dbReference type="PDBsum" id="1PSE"/>
<dbReference type="PDBsum" id="1PSF"/>
<dbReference type="SMR" id="P31969"/>
<dbReference type="STRING" id="32049.SYNPCC7002_A1393"/>
<dbReference type="KEGG" id="syp:SYNPCC7002_A1393"/>
<dbReference type="eggNOG" id="ENOG503313D">
    <property type="taxonomic scope" value="Bacteria"/>
</dbReference>
<dbReference type="HOGENOM" id="CLU_136462_2_1_3"/>
<dbReference type="EvolutionaryTrace" id="P31969"/>
<dbReference type="Proteomes" id="UP000001688">
    <property type="component" value="Chromosome"/>
</dbReference>
<dbReference type="GO" id="GO:0009538">
    <property type="term" value="C:photosystem I reaction center"/>
    <property type="evidence" value="ECO:0007669"/>
    <property type="project" value="InterPro"/>
</dbReference>
<dbReference type="GO" id="GO:0031676">
    <property type="term" value="C:plasma membrane-derived thylakoid membrane"/>
    <property type="evidence" value="ECO:0007669"/>
    <property type="project" value="UniProtKB-SubCell"/>
</dbReference>
<dbReference type="GO" id="GO:0015979">
    <property type="term" value="P:photosynthesis"/>
    <property type="evidence" value="ECO:0007669"/>
    <property type="project" value="UniProtKB-UniRule"/>
</dbReference>
<dbReference type="Gene3D" id="2.30.30.50">
    <property type="match status" value="1"/>
</dbReference>
<dbReference type="HAMAP" id="MF_00613">
    <property type="entry name" value="PSI_PsaE"/>
    <property type="match status" value="1"/>
</dbReference>
<dbReference type="InterPro" id="IPR008990">
    <property type="entry name" value="Elect_transpt_acc-like_dom_sf"/>
</dbReference>
<dbReference type="InterPro" id="IPR003375">
    <property type="entry name" value="PSI_PsaE"/>
</dbReference>
<dbReference type="NCBIfam" id="NF002745">
    <property type="entry name" value="PRK02749.1"/>
    <property type="match status" value="1"/>
</dbReference>
<dbReference type="PANTHER" id="PTHR34549">
    <property type="entry name" value="PHOTOSYSTEM I REACTION CENTER SUBUNIT IV A, CHLOROPLASTIC-RELATED"/>
    <property type="match status" value="1"/>
</dbReference>
<dbReference type="PANTHER" id="PTHR34549:SF2">
    <property type="entry name" value="PHOTOSYSTEM I SUBUNIT IV"/>
    <property type="match status" value="1"/>
</dbReference>
<dbReference type="Pfam" id="PF02427">
    <property type="entry name" value="PSI_PsaE"/>
    <property type="match status" value="1"/>
</dbReference>
<dbReference type="SUPFAM" id="SSF50090">
    <property type="entry name" value="Electron transport accessory proteins"/>
    <property type="match status" value="1"/>
</dbReference>
<organism>
    <name type="scientific">Picosynechococcus sp. (strain ATCC 27264 / PCC 7002 / PR-6)</name>
    <name type="common">Agmenellum quadruplicatum</name>
    <dbReference type="NCBI Taxonomy" id="32049"/>
    <lineage>
        <taxon>Bacteria</taxon>
        <taxon>Bacillati</taxon>
        <taxon>Cyanobacteriota</taxon>
        <taxon>Cyanophyceae</taxon>
        <taxon>Oscillatoriophycideae</taxon>
        <taxon>Chroococcales</taxon>
        <taxon>Geminocystaceae</taxon>
        <taxon>Picosynechococcus</taxon>
    </lineage>
</organism>
<accession>P31969</accession>
<accession>B1XMA3</accession>
<name>PSAE_PICP2</name>
<comment type="function">
    <text>Stabilizes the interaction between PsaC and the PSI core, assists the docking of the ferredoxin to PSI and interacts with ferredoxin-NADP oxidoreductase.</text>
</comment>
<comment type="subcellular location">
    <subcellularLocation>
        <location>Cellular thylakoid membrane</location>
        <topology>Peripheral membrane protein</topology>
    </subcellularLocation>
</comment>
<comment type="similarity">
    <text evidence="2">Belongs to the PsaE family.</text>
</comment>
<feature type="initiator methionine" description="Removed" evidence="1">
    <location>
        <position position="1"/>
    </location>
</feature>
<feature type="chain" id="PRO_0000204410" description="Photosystem I reaction center subunit IV">
    <location>
        <begin position="2"/>
        <end position="70"/>
    </location>
</feature>
<feature type="strand" evidence="3">
    <location>
        <begin position="8"/>
        <end position="11"/>
    </location>
</feature>
<feature type="turn" evidence="3">
    <location>
        <begin position="17"/>
        <end position="20"/>
    </location>
</feature>
<feature type="strand" evidence="3">
    <location>
        <begin position="21"/>
        <end position="27"/>
    </location>
</feature>
<feature type="strand" evidence="3">
    <location>
        <begin position="37"/>
        <end position="40"/>
    </location>
</feature>
<feature type="strand" evidence="3">
    <location>
        <begin position="58"/>
        <end position="61"/>
    </location>
</feature>
<feature type="turn" evidence="3">
    <location>
        <begin position="63"/>
        <end position="65"/>
    </location>
</feature>
<feature type="strand" evidence="3">
    <location>
        <begin position="66"/>
        <end position="68"/>
    </location>
</feature>
<protein>
    <recommendedName>
        <fullName>Photosystem I reaction center subunit IV</fullName>
    </recommendedName>
</protein>
<keyword id="KW-0002">3D-structure</keyword>
<keyword id="KW-0472">Membrane</keyword>
<keyword id="KW-0602">Photosynthesis</keyword>
<keyword id="KW-0603">Photosystem I</keyword>
<keyword id="KW-1185">Reference proteome</keyword>
<keyword id="KW-0793">Thylakoid</keyword>